<organism>
    <name type="scientific">Mus musculus</name>
    <name type="common">Mouse</name>
    <dbReference type="NCBI Taxonomy" id="10090"/>
    <lineage>
        <taxon>Eukaryota</taxon>
        <taxon>Metazoa</taxon>
        <taxon>Chordata</taxon>
        <taxon>Craniata</taxon>
        <taxon>Vertebrata</taxon>
        <taxon>Euteleostomi</taxon>
        <taxon>Mammalia</taxon>
        <taxon>Eutheria</taxon>
        <taxon>Euarchontoglires</taxon>
        <taxon>Glires</taxon>
        <taxon>Rodentia</taxon>
        <taxon>Myomorpha</taxon>
        <taxon>Muroidea</taxon>
        <taxon>Muridae</taxon>
        <taxon>Murinae</taxon>
        <taxon>Mus</taxon>
        <taxon>Mus</taxon>
    </lineage>
</organism>
<protein>
    <recommendedName>
        <fullName>Oxysterol-binding protein-related protein 9</fullName>
        <shortName>ORP-9</shortName>
        <shortName>OSBP-related protein 9</shortName>
    </recommendedName>
</protein>
<gene>
    <name type="primary">Osbpl9</name>
    <name type="synonym">Orp9</name>
</gene>
<proteinExistence type="evidence at protein level"/>
<name>OSBL9_MOUSE</name>
<dbReference type="EMBL" id="AL627103">
    <property type="status" value="NOT_ANNOTATED_CDS"/>
    <property type="molecule type" value="Genomic_DNA"/>
</dbReference>
<dbReference type="EMBL" id="AL627406">
    <property type="status" value="NOT_ANNOTATED_CDS"/>
    <property type="molecule type" value="Genomic_DNA"/>
</dbReference>
<dbReference type="CCDS" id="CCDS51258.1">
    <molecule id="A2A8Z1-2"/>
</dbReference>
<dbReference type="CCDS" id="CCDS89802.1">
    <molecule id="A2A8Z1-1"/>
</dbReference>
<dbReference type="RefSeq" id="NP_001355656.1">
    <molecule id="A2A8Z1-1"/>
    <property type="nucleotide sequence ID" value="NM_001368727.1"/>
</dbReference>
<dbReference type="RefSeq" id="NP_775485.2">
    <molecule id="A2A8Z1-2"/>
    <property type="nucleotide sequence ID" value="NM_173350.3"/>
</dbReference>
<dbReference type="RefSeq" id="XP_006502682.2">
    <property type="nucleotide sequence ID" value="XM_006502619.3"/>
</dbReference>
<dbReference type="SMR" id="A2A8Z1"/>
<dbReference type="FunCoup" id="A2A8Z1">
    <property type="interactions" value="3827"/>
</dbReference>
<dbReference type="STRING" id="10090.ENSMUSP00000141991"/>
<dbReference type="GlyGen" id="A2A8Z1">
    <property type="glycosylation" value="1 site, 1 O-linked glycan (1 site)"/>
</dbReference>
<dbReference type="iPTMnet" id="A2A8Z1"/>
<dbReference type="PhosphoSitePlus" id="A2A8Z1"/>
<dbReference type="jPOST" id="A2A8Z1"/>
<dbReference type="PaxDb" id="10090-ENSMUSP00000124370"/>
<dbReference type="PeptideAtlas" id="A2A8Z1"/>
<dbReference type="ProteomicsDB" id="294116">
    <molecule id="A2A8Z1-1"/>
</dbReference>
<dbReference type="ProteomicsDB" id="294117">
    <molecule id="A2A8Z1-2"/>
</dbReference>
<dbReference type="Pumba" id="A2A8Z1"/>
<dbReference type="Antibodypedia" id="18985">
    <property type="antibodies" value="137 antibodies from 32 providers"/>
</dbReference>
<dbReference type="DNASU" id="100273"/>
<dbReference type="Ensembl" id="ENSMUST00000030288.14">
    <molecule id="A2A8Z1-1"/>
    <property type="protein sequence ID" value="ENSMUSP00000030288.8"/>
    <property type="gene ID" value="ENSMUSG00000028559.18"/>
</dbReference>
<dbReference type="Ensembl" id="ENSMUST00000084366.13">
    <molecule id="A2A8Z1-2"/>
    <property type="protein sequence ID" value="ENSMUSP00000081396.7"/>
    <property type="gene ID" value="ENSMUSG00000028559.18"/>
</dbReference>
<dbReference type="GeneID" id="100273"/>
<dbReference type="KEGG" id="mmu:100273"/>
<dbReference type="UCSC" id="uc008uca.2">
    <molecule id="A2A8Z1-2"/>
    <property type="organism name" value="mouse"/>
</dbReference>
<dbReference type="AGR" id="MGI:1923784"/>
<dbReference type="CTD" id="114883"/>
<dbReference type="MGI" id="MGI:1923784">
    <property type="gene designation" value="Osbpl9"/>
</dbReference>
<dbReference type="VEuPathDB" id="HostDB:ENSMUSG00000028559"/>
<dbReference type="eggNOG" id="KOG2210">
    <property type="taxonomic scope" value="Eukaryota"/>
</dbReference>
<dbReference type="GeneTree" id="ENSGT00940000154690"/>
<dbReference type="InParanoid" id="A2A8Z1"/>
<dbReference type="OrthoDB" id="48057at2759"/>
<dbReference type="PhylomeDB" id="A2A8Z1"/>
<dbReference type="Reactome" id="R-MMU-192105">
    <property type="pathway name" value="Synthesis of bile acids and bile salts"/>
</dbReference>
<dbReference type="BioGRID-ORCS" id="100273">
    <property type="hits" value="8 hits in 80 CRISPR screens"/>
</dbReference>
<dbReference type="ChiTaRS" id="Osbpl9">
    <property type="organism name" value="mouse"/>
</dbReference>
<dbReference type="PRO" id="PR:A2A8Z1"/>
<dbReference type="Proteomes" id="UP000000589">
    <property type="component" value="Chromosome 4"/>
</dbReference>
<dbReference type="RNAct" id="A2A8Z1">
    <property type="molecule type" value="protein"/>
</dbReference>
<dbReference type="Bgee" id="ENSMUSG00000028559">
    <property type="expression patterns" value="Expressed in stroma of bone marrow and 250 other cell types or tissues"/>
</dbReference>
<dbReference type="ExpressionAtlas" id="A2A8Z1">
    <property type="expression patterns" value="baseline and differential"/>
</dbReference>
<dbReference type="GO" id="GO:0005794">
    <property type="term" value="C:Golgi apparatus"/>
    <property type="evidence" value="ECO:0007669"/>
    <property type="project" value="UniProtKB-SubCell"/>
</dbReference>
<dbReference type="GO" id="GO:0031902">
    <property type="term" value="C:late endosome membrane"/>
    <property type="evidence" value="ECO:0007669"/>
    <property type="project" value="UniProtKB-SubCell"/>
</dbReference>
<dbReference type="GO" id="GO:0008289">
    <property type="term" value="F:lipid binding"/>
    <property type="evidence" value="ECO:0007669"/>
    <property type="project" value="UniProtKB-KW"/>
</dbReference>
<dbReference type="GO" id="GO:0006869">
    <property type="term" value="P:lipid transport"/>
    <property type="evidence" value="ECO:0007669"/>
    <property type="project" value="UniProtKB-KW"/>
</dbReference>
<dbReference type="CDD" id="cd13290">
    <property type="entry name" value="PH_ORP9"/>
    <property type="match status" value="1"/>
</dbReference>
<dbReference type="FunFam" id="1.10.287.2720:FF:000001">
    <property type="entry name" value="Oxysterol-binding OBPalpha"/>
    <property type="match status" value="1"/>
</dbReference>
<dbReference type="FunFam" id="2.30.29.30:FF:000089">
    <property type="entry name" value="Oxysterol-binding protein"/>
    <property type="match status" value="1"/>
</dbReference>
<dbReference type="FunFam" id="2.40.160.120:FF:000002">
    <property type="entry name" value="Oxysterol-binding protein"/>
    <property type="match status" value="1"/>
</dbReference>
<dbReference type="FunFam" id="3.30.70.3490:FF:000001">
    <property type="entry name" value="Oxysterol-binding protein"/>
    <property type="match status" value="1"/>
</dbReference>
<dbReference type="Gene3D" id="1.10.287.2720">
    <property type="match status" value="1"/>
</dbReference>
<dbReference type="Gene3D" id="2.40.160.120">
    <property type="match status" value="1"/>
</dbReference>
<dbReference type="Gene3D" id="3.30.70.3490">
    <property type="match status" value="1"/>
</dbReference>
<dbReference type="Gene3D" id="2.30.29.30">
    <property type="entry name" value="Pleckstrin-homology domain (PH domain)/Phosphotyrosine-binding domain (PTB)"/>
    <property type="match status" value="1"/>
</dbReference>
<dbReference type="InterPro" id="IPR037239">
    <property type="entry name" value="OSBP_sf"/>
</dbReference>
<dbReference type="InterPro" id="IPR000648">
    <property type="entry name" value="Oxysterol-bd"/>
</dbReference>
<dbReference type="InterPro" id="IPR018494">
    <property type="entry name" value="Oxysterol-bd_CS"/>
</dbReference>
<dbReference type="InterPro" id="IPR011993">
    <property type="entry name" value="PH-like_dom_sf"/>
</dbReference>
<dbReference type="InterPro" id="IPR001849">
    <property type="entry name" value="PH_domain"/>
</dbReference>
<dbReference type="PANTHER" id="PTHR10972">
    <property type="entry name" value="OXYSTEROL-BINDING PROTEIN-RELATED"/>
    <property type="match status" value="1"/>
</dbReference>
<dbReference type="PANTHER" id="PTHR10972:SF200">
    <property type="entry name" value="OXYSTEROL-BINDING PROTEIN-RELATED PROTEIN 9"/>
    <property type="match status" value="1"/>
</dbReference>
<dbReference type="Pfam" id="PF01237">
    <property type="entry name" value="Oxysterol_BP"/>
    <property type="match status" value="2"/>
</dbReference>
<dbReference type="Pfam" id="PF00169">
    <property type="entry name" value="PH"/>
    <property type="match status" value="1"/>
</dbReference>
<dbReference type="SMART" id="SM00233">
    <property type="entry name" value="PH"/>
    <property type="match status" value="1"/>
</dbReference>
<dbReference type="SUPFAM" id="SSF144000">
    <property type="entry name" value="Oxysterol-binding protein-like"/>
    <property type="match status" value="1"/>
</dbReference>
<dbReference type="SUPFAM" id="SSF50729">
    <property type="entry name" value="PH domain-like"/>
    <property type="match status" value="1"/>
</dbReference>
<dbReference type="PROSITE" id="PS01013">
    <property type="entry name" value="OSBP"/>
    <property type="match status" value="1"/>
</dbReference>
<dbReference type="PROSITE" id="PS50003">
    <property type="entry name" value="PH_DOMAIN"/>
    <property type="match status" value="1"/>
</dbReference>
<keyword id="KW-0007">Acetylation</keyword>
<keyword id="KW-0025">Alternative splicing</keyword>
<keyword id="KW-0967">Endosome</keyword>
<keyword id="KW-0333">Golgi apparatus</keyword>
<keyword id="KW-0445">Lipid transport</keyword>
<keyword id="KW-0446">Lipid-binding</keyword>
<keyword id="KW-0472">Membrane</keyword>
<keyword id="KW-0597">Phosphoprotein</keyword>
<keyword id="KW-1185">Reference proteome</keyword>
<keyword id="KW-0813">Transport</keyword>
<comment type="function">
    <text evidence="2">Interacts with OSBPL11 to function as lipid transfer proteins. Together they form a heterodimer that localizes at the ER-trans-Golgi membrane contact sites, and exchanges phosphatidylserine (1,2-diacyl-sn-glycero-3-phospho-L-serine, PS) for phosphatidylinositol-4-phosphate (1,2-diacyl-sn-glycero-3-phospho-(1D-myo-inositol 4-phosphate), PI(4)P) between the two organelles, a step that is critical for sphingomyelin synthesis in the Golgi complex.</text>
</comment>
<comment type="catalytic activity">
    <reaction evidence="2">
        <text>a 1,2-diacyl-sn-glycero-3-phospho-(1D-myo-inositol 4-phosphate)(out) + a 1,2-diacyl-sn-glycero-3-phospho-L-serine(in) = a 1,2-diacyl-sn-glycero-3-phospho-(1D-myo-inositol 4-phosphate)(in) + a 1,2-diacyl-sn-glycero-3-phospho-L-serine(out)</text>
        <dbReference type="Rhea" id="RHEA:81667"/>
        <dbReference type="ChEBI" id="CHEBI:57262"/>
        <dbReference type="ChEBI" id="CHEBI:58178"/>
    </reaction>
</comment>
<comment type="subunit">
    <text evidence="2">Heterodimer with OSBPL11. Interacts with OSBPL10.</text>
</comment>
<comment type="subcellular location">
    <subcellularLocation>
        <location evidence="1">Late endosome membrane</location>
    </subcellularLocation>
    <subcellularLocation>
        <location evidence="1">Golgi apparatus</location>
        <location evidence="1">trans-Golgi network membrane</location>
    </subcellularLocation>
    <text evidence="1">Localizes at the Golgi-late endosome interface.</text>
</comment>
<comment type="alternative products">
    <event type="alternative splicing"/>
    <isoform>
        <id>A2A8Z1-1</id>
        <name>1</name>
        <sequence type="displayed"/>
    </isoform>
    <isoform>
        <id>A2A8Z1-2</id>
        <name>2</name>
        <sequence type="described" ref="VSP_036572 VSP_036573"/>
    </isoform>
</comment>
<comment type="similarity">
    <text evidence="5">Belongs to the OSBP family.</text>
</comment>
<feature type="initiator methionine" description="Removed" evidence="2">
    <location>
        <position position="1"/>
    </location>
</feature>
<feature type="chain" id="PRO_0000366289" description="Oxysterol-binding protein-related protein 9">
    <location>
        <begin position="2"/>
        <end position="736"/>
    </location>
</feature>
<feature type="domain" description="PH" evidence="3">
    <location>
        <begin position="2"/>
        <end position="99"/>
    </location>
</feature>
<feature type="region of interest" description="Disordered" evidence="4">
    <location>
        <begin position="209"/>
        <end position="368"/>
    </location>
</feature>
<feature type="compositionally biased region" description="Low complexity" evidence="4">
    <location>
        <begin position="253"/>
        <end position="274"/>
    </location>
</feature>
<feature type="compositionally biased region" description="Polar residues" evidence="4">
    <location>
        <begin position="314"/>
        <end position="329"/>
    </location>
</feature>
<feature type="compositionally biased region" description="Polar residues" evidence="4">
    <location>
        <begin position="336"/>
        <end position="348"/>
    </location>
</feature>
<feature type="modified residue" description="N-acetylalanine" evidence="2">
    <location>
        <position position="2"/>
    </location>
</feature>
<feature type="modified residue" description="Phosphoserine" evidence="2">
    <location>
        <position position="306"/>
    </location>
</feature>
<feature type="modified residue" description="Phosphoserine" evidence="2">
    <location>
        <position position="324"/>
    </location>
</feature>
<feature type="modified residue" description="Phosphoserine" evidence="2">
    <location>
        <position position="325"/>
    </location>
</feature>
<feature type="modified residue" description="Phosphoserine" evidence="6">
    <location>
        <position position="326"/>
    </location>
</feature>
<feature type="modified residue" description="Phosphoserine" evidence="2">
    <location>
        <position position="329"/>
    </location>
</feature>
<feature type="modified residue" description="Phosphoserine" evidence="2">
    <location>
        <position position="611"/>
    </location>
</feature>
<feature type="splice variant" id="VSP_036572" description="In isoform 2." evidence="5">
    <location>
        <begin position="1"/>
        <end position="97"/>
    </location>
</feature>
<feature type="splice variant" id="VSP_036573" description="In isoform 2." evidence="5">
    <original>ILRHTLQLQ</original>
    <variation>MALLLAACG</variation>
    <location>
        <begin position="98"/>
        <end position="106"/>
    </location>
</feature>
<sequence length="736" mass="83109">MASIVEGPLSKWTNVMKGWQYRWFVLDYNAGLLSYYTSKDKMMRGSRRGCVRLRGAVIGIDDEDDSTFTITVDQKTFHFQARDADEREKWIHALEETILRHTLQLQGLDSGFIPSVQDFDKKLTEADAYLQILIEQLKLFDDKLQNCKDDEQRKKVETLKDTTNSMVESIKHCIVLLQIAKDQSNAEQHADGIISTINPVDAIYQPSPLEPVISTMPSQTALPPEPAQLCKSEQRPSSLPVGPVLATLGHHQTPTPNSTGSGNSPPSSSLTPPSHVNLSPNTVPEFSYSSSEDEFYDADEFHQSGSSPKRLIDSSGSASVLTHSSSGNSLKRPDTTESLNSSMSNGTSDADLFDSHDDRDDDGEAGSVEEHKSVIMHLLSQVRLGMDLTKVVLPTFILERRSLLEMYADFFAHPDLFVSISDQKDPRDRMVQVVKWYLSAFHAGRRGSVAKKPYNPILGEIFQCHWTLPNDTEENAELVSEGPVPWVSKNSVTFVAEQVSHHPPISAFYAECFNKKIQFNAHIWTKSKFLGMSIGVHNIGQGCVSCLEYDEHYILTFPNGYGRSILTVPWVELGGECNINCSKTGYSANIVFHTKPFYGGKKHRITAEIFSPNDKKSFCSIEGEWNGIMYAKYATGENTVFVDTKKLPIIKKKVRKLEDQNEYESRSLWKDVTFNLKIRDIDAATEAKHRLEERQRAEARERKEKEIQWETRLFHEDGECWVYDEPLLKRLGAVKH</sequence>
<reference key="1">
    <citation type="journal article" date="2009" name="PLoS Biol.">
        <title>Lineage-specific biology revealed by a finished genome assembly of the mouse.</title>
        <authorList>
            <person name="Church D.M."/>
            <person name="Goodstadt L."/>
            <person name="Hillier L.W."/>
            <person name="Zody M.C."/>
            <person name="Goldstein S."/>
            <person name="She X."/>
            <person name="Bult C.J."/>
            <person name="Agarwala R."/>
            <person name="Cherry J.L."/>
            <person name="DiCuccio M."/>
            <person name="Hlavina W."/>
            <person name="Kapustin Y."/>
            <person name="Meric P."/>
            <person name="Maglott D."/>
            <person name="Birtle Z."/>
            <person name="Marques A.C."/>
            <person name="Graves T."/>
            <person name="Zhou S."/>
            <person name="Teague B."/>
            <person name="Potamousis K."/>
            <person name="Churas C."/>
            <person name="Place M."/>
            <person name="Herschleb J."/>
            <person name="Runnheim R."/>
            <person name="Forrest D."/>
            <person name="Amos-Landgraf J."/>
            <person name="Schwartz D.C."/>
            <person name="Cheng Z."/>
            <person name="Lindblad-Toh K."/>
            <person name="Eichler E.E."/>
            <person name="Ponting C.P."/>
        </authorList>
    </citation>
    <scope>NUCLEOTIDE SEQUENCE [LARGE SCALE GENOMIC DNA]</scope>
    <source>
        <strain>C57BL/6J</strain>
    </source>
</reference>
<reference key="2">
    <citation type="journal article" date="2007" name="Proc. Natl. Acad. Sci. U.S.A.">
        <title>Large-scale phosphorylation analysis of mouse liver.</title>
        <authorList>
            <person name="Villen J."/>
            <person name="Beausoleil S.A."/>
            <person name="Gerber S.A."/>
            <person name="Gygi S.P."/>
        </authorList>
    </citation>
    <scope>IDENTIFICATION BY MASS SPECTROMETRY [LARGE SCALE ANALYSIS]</scope>
    <source>
        <tissue>Liver</tissue>
    </source>
</reference>
<reference key="3">
    <citation type="journal article" date="2010" name="Cell">
        <title>A tissue-specific atlas of mouse protein phosphorylation and expression.</title>
        <authorList>
            <person name="Huttlin E.L."/>
            <person name="Jedrychowski M.P."/>
            <person name="Elias J.E."/>
            <person name="Goswami T."/>
            <person name="Rad R."/>
            <person name="Beausoleil S.A."/>
            <person name="Villen J."/>
            <person name="Haas W."/>
            <person name="Sowa M.E."/>
            <person name="Gygi S.P."/>
        </authorList>
    </citation>
    <scope>PHOSPHORYLATION [LARGE SCALE ANALYSIS] AT SER-326</scope>
    <scope>IDENTIFICATION BY MASS SPECTROMETRY [LARGE SCALE ANALYSIS]</scope>
    <source>
        <tissue>Brain</tissue>
        <tissue>Heart</tissue>
        <tissue>Kidney</tissue>
        <tissue>Liver</tissue>
        <tissue>Lung</tissue>
        <tissue>Pancreas</tissue>
        <tissue>Spleen</tissue>
        <tissue>Testis</tissue>
    </source>
</reference>
<accession>A2A8Z1</accession>
<accession>A2A9Q8</accession>
<evidence type="ECO:0000250" key="1"/>
<evidence type="ECO:0000250" key="2">
    <source>
        <dbReference type="UniProtKB" id="Q96SU4"/>
    </source>
</evidence>
<evidence type="ECO:0000255" key="3">
    <source>
        <dbReference type="PROSITE-ProRule" id="PRU00145"/>
    </source>
</evidence>
<evidence type="ECO:0000256" key="4">
    <source>
        <dbReference type="SAM" id="MobiDB-lite"/>
    </source>
</evidence>
<evidence type="ECO:0000305" key="5"/>
<evidence type="ECO:0007744" key="6">
    <source>
    </source>
</evidence>